<proteinExistence type="evidence at protein level"/>
<evidence type="ECO:0000250" key="1">
    <source>
        <dbReference type="UniProtKB" id="Q5EZ72"/>
    </source>
</evidence>
<evidence type="ECO:0000250" key="2">
    <source>
        <dbReference type="UniProtKB" id="Q6UWV6"/>
    </source>
</evidence>
<evidence type="ECO:0000255" key="3"/>
<evidence type="ECO:0000255" key="4">
    <source>
        <dbReference type="PROSITE-ProRule" id="PRU00498"/>
    </source>
</evidence>
<evidence type="ECO:0000269" key="5">
    <source>
    </source>
</evidence>
<evidence type="ECO:0000269" key="6">
    <source>
    </source>
</evidence>
<evidence type="ECO:0000305" key="7"/>
<evidence type="ECO:0000305" key="8">
    <source>
    </source>
</evidence>
<evidence type="ECO:0000312" key="9">
    <source>
        <dbReference type="MGI" id="MGI:3027917"/>
    </source>
</evidence>
<protein>
    <recommendedName>
        <fullName evidence="7">Ectonucleotide pyrophosphatase/phosphodiesterase family member 7</fullName>
        <shortName>E-NPP 7</shortName>
        <shortName>NPP-7</shortName>
        <ecNumber evidence="5">3.1.4.12</ecNumber>
    </recommendedName>
    <alternativeName>
        <fullName>Alkaline sphingomyelin phosphodiesterase</fullName>
    </alternativeName>
    <alternativeName>
        <fullName evidence="2">Intestinal alkaline sphingomyelinase</fullName>
        <shortName evidence="2">Alk-SMase</shortName>
    </alternativeName>
</protein>
<keyword id="KW-1003">Cell membrane</keyword>
<keyword id="KW-0325">Glycoprotein</keyword>
<keyword id="KW-0378">Hydrolase</keyword>
<keyword id="KW-0443">Lipid metabolism</keyword>
<keyword id="KW-0472">Membrane</keyword>
<keyword id="KW-0479">Metal-binding</keyword>
<keyword id="KW-1185">Reference proteome</keyword>
<keyword id="KW-0732">Signal</keyword>
<keyword id="KW-0812">Transmembrane</keyword>
<keyword id="KW-1133">Transmembrane helix</keyword>
<keyword id="KW-0862">Zinc</keyword>
<comment type="function">
    <text evidence="2 5 6">Choline-specific phosphodiesterase that hydrolyzes sphingomyelin releasing the ceramide and phosphocholine and therefore is involved in sphingomyelin digestion, ceramide formation, and fatty acid (FA) absorption in the gastrointestinal tract (PubMed:21177474). Also has phospholipase C activity and can also cleave phosphocholine from palmitoyl lyso-phosphatidylcholine and platelet-activating factor (PAF) leading to its inactivation. Does not have nucleotide pyrophosphatase activity (By similarity). May promote cholesterol absorption by affecting the levels of sphingomyelin derived from either diet or endogenous sources, in the intestinal lumen (PubMed:24650549).</text>
</comment>
<comment type="catalytic activity">
    <reaction evidence="5">
        <text>a sphingomyelin + H2O = phosphocholine + an N-acylsphing-4-enine + H(+)</text>
        <dbReference type="Rhea" id="RHEA:19253"/>
        <dbReference type="ChEBI" id="CHEBI:15377"/>
        <dbReference type="ChEBI" id="CHEBI:15378"/>
        <dbReference type="ChEBI" id="CHEBI:17636"/>
        <dbReference type="ChEBI" id="CHEBI:52639"/>
        <dbReference type="ChEBI" id="CHEBI:295975"/>
        <dbReference type="EC" id="3.1.4.12"/>
    </reaction>
    <physiologicalReaction direction="left-to-right" evidence="8">
        <dbReference type="Rhea" id="RHEA:19254"/>
    </physiologicalReaction>
</comment>
<comment type="catalytic activity">
    <reaction evidence="2">
        <text>a 1-O-alkyl-2-acetyl-sn-glycero-3-phosphocholine + H2O = a 1-O-alkyl-2-acetyl-sn-glycerol + phosphocholine + H(+)</text>
        <dbReference type="Rhea" id="RHEA:63380"/>
        <dbReference type="ChEBI" id="CHEBI:15377"/>
        <dbReference type="ChEBI" id="CHEBI:15378"/>
        <dbReference type="ChEBI" id="CHEBI:16291"/>
        <dbReference type="ChEBI" id="CHEBI:36707"/>
        <dbReference type="ChEBI" id="CHEBI:295975"/>
    </reaction>
    <physiologicalReaction direction="left-to-right" evidence="2">
        <dbReference type="Rhea" id="RHEA:63381"/>
    </physiologicalReaction>
</comment>
<comment type="catalytic activity">
    <reaction evidence="1">
        <text>1-O-octadecyl-2-acetyl-sn-glycero-3-phosphocholine + H2O = 1-O-octadecyl-2-acetyl-sn-glycerol + phosphocholine + H(+)</text>
        <dbReference type="Rhea" id="RHEA:63384"/>
        <dbReference type="ChEBI" id="CHEBI:15377"/>
        <dbReference type="ChEBI" id="CHEBI:15378"/>
        <dbReference type="ChEBI" id="CHEBI:52450"/>
        <dbReference type="ChEBI" id="CHEBI:147296"/>
        <dbReference type="ChEBI" id="CHEBI:295975"/>
    </reaction>
    <physiologicalReaction direction="left-to-right" evidence="1">
        <dbReference type="Rhea" id="RHEA:63385"/>
    </physiologicalReaction>
</comment>
<comment type="catalytic activity">
    <reaction evidence="2">
        <text>1-hexadecanoyl-sn-glycero-3-phosphocholine + H2O = 1-hexadecanoyl-sn-glycerol + phosphocholine + H(+)</text>
        <dbReference type="Rhea" id="RHEA:41119"/>
        <dbReference type="ChEBI" id="CHEBI:15377"/>
        <dbReference type="ChEBI" id="CHEBI:15378"/>
        <dbReference type="ChEBI" id="CHEBI:72998"/>
        <dbReference type="ChEBI" id="CHEBI:75542"/>
        <dbReference type="ChEBI" id="CHEBI:295975"/>
    </reaction>
    <physiologicalReaction direction="left-to-right" evidence="2">
        <dbReference type="Rhea" id="RHEA:41120"/>
    </physiologicalReaction>
</comment>
<comment type="cofactor">
    <cofactor evidence="2">
        <name>Zn(2+)</name>
        <dbReference type="ChEBI" id="CHEBI:29105"/>
    </cofactor>
</comment>
<comment type="subcellular location">
    <subcellularLocation>
        <location evidence="2">Cell membrane</location>
        <topology evidence="2">Single-pass type I membrane protein</topology>
    </subcellularLocation>
    <text evidence="2">The catalytic domain is released into the extracellular medium when cells are treated with trypsin. Localized at the surface of the microvillar membrane in small intestine enterocytes, and in endosome-like structures situated beneath the microvillar membrane, and in Golgi complex.</text>
</comment>
<comment type="tissue specificity">
    <text evidence="5">Expressed in liver and small intestine.</text>
</comment>
<comment type="PTM">
    <text evidence="2">N-glycosylated; required for activity and transport to the plasma membrane.</text>
</comment>
<comment type="disruption phenotype">
    <text evidence="5">Mutant mice are born at the expected Mendelian rate, are viable and fertile, are grown normally without obvious abnormalities. Mice shown signs of hypertrophy of the intestinal epithelium, as the widths of the villi and crypts, as well as the thickness of muscle layer under the crypts appear increased. However, no spontaneous tumorigenesis either in the small intestine or in the colon is identifiedknockout mice up to the age of 10 months.</text>
</comment>
<gene>
    <name evidence="9" type="primary">Enpp7</name>
</gene>
<organism>
    <name type="scientific">Mus musculus</name>
    <name type="common">Mouse</name>
    <dbReference type="NCBI Taxonomy" id="10090"/>
    <lineage>
        <taxon>Eukaryota</taxon>
        <taxon>Metazoa</taxon>
        <taxon>Chordata</taxon>
        <taxon>Craniata</taxon>
        <taxon>Vertebrata</taxon>
        <taxon>Euteleostomi</taxon>
        <taxon>Mammalia</taxon>
        <taxon>Eutheria</taxon>
        <taxon>Euarchontoglires</taxon>
        <taxon>Glires</taxon>
        <taxon>Rodentia</taxon>
        <taxon>Myomorpha</taxon>
        <taxon>Muroidea</taxon>
        <taxon>Muridae</taxon>
        <taxon>Murinae</taxon>
        <taxon>Mus</taxon>
        <taxon>Mus</taxon>
    </lineage>
</organism>
<accession>Q3TIW9</accession>
<accession>A2A5N7</accession>
<accession>D3Z6V6</accession>
<sequence>MGHSAVLLCVALAILPACVTGAPVQRQHKLLLVSFDGFRWNYDQDVDTPNLDSMAQEGVKAQYMTPAFVTMTSPCHFTLVTGKYIENHGVVHNMFYNTTSTVRLPYHATLGIQRWWDNGSIPIWITAQRQGLKTGSFFYPGGNVTYQGEAVTMSRKEGVLHNYKNETEWRGNVDTVMKWFLEEDVSLVTLYFGEPDSTGHKYGPESQERKDMVKQVDRTVGYLRDSIKRHHLSDSLNLIITSDHGMTTVNKKASDLVEFHKFSNFTFQDIQFELLDYGPIGMLIPKEGMLEKVYSVLKDAHPRLHVYKKEDFPKNFHYANNPRITPLLMYSDLGYVIHGRVNVQFNNGEHGFNNQDMDMKTIFRAVGPSFKAGLEVEPFESVHVYELMCQLLGIVPEPNDGNPGILRPMLRSGSASLLSSQHHLVALLVGILTCLAKVL</sequence>
<name>ENPP7_MOUSE</name>
<reference key="1">
    <citation type="journal article" date="2005" name="Science">
        <title>The transcriptional landscape of the mammalian genome.</title>
        <authorList>
            <person name="Carninci P."/>
            <person name="Kasukawa T."/>
            <person name="Katayama S."/>
            <person name="Gough J."/>
            <person name="Frith M.C."/>
            <person name="Maeda N."/>
            <person name="Oyama R."/>
            <person name="Ravasi T."/>
            <person name="Lenhard B."/>
            <person name="Wells C."/>
            <person name="Kodzius R."/>
            <person name="Shimokawa K."/>
            <person name="Bajic V.B."/>
            <person name="Brenner S.E."/>
            <person name="Batalov S."/>
            <person name="Forrest A.R."/>
            <person name="Zavolan M."/>
            <person name="Davis M.J."/>
            <person name="Wilming L.G."/>
            <person name="Aidinis V."/>
            <person name="Allen J.E."/>
            <person name="Ambesi-Impiombato A."/>
            <person name="Apweiler R."/>
            <person name="Aturaliya R.N."/>
            <person name="Bailey T.L."/>
            <person name="Bansal M."/>
            <person name="Baxter L."/>
            <person name="Beisel K.W."/>
            <person name="Bersano T."/>
            <person name="Bono H."/>
            <person name="Chalk A.M."/>
            <person name="Chiu K.P."/>
            <person name="Choudhary V."/>
            <person name="Christoffels A."/>
            <person name="Clutterbuck D.R."/>
            <person name="Crowe M.L."/>
            <person name="Dalla E."/>
            <person name="Dalrymple B.P."/>
            <person name="de Bono B."/>
            <person name="Della Gatta G."/>
            <person name="di Bernardo D."/>
            <person name="Down T."/>
            <person name="Engstrom P."/>
            <person name="Fagiolini M."/>
            <person name="Faulkner G."/>
            <person name="Fletcher C.F."/>
            <person name="Fukushima T."/>
            <person name="Furuno M."/>
            <person name="Futaki S."/>
            <person name="Gariboldi M."/>
            <person name="Georgii-Hemming P."/>
            <person name="Gingeras T.R."/>
            <person name="Gojobori T."/>
            <person name="Green R.E."/>
            <person name="Gustincich S."/>
            <person name="Harbers M."/>
            <person name="Hayashi Y."/>
            <person name="Hensch T.K."/>
            <person name="Hirokawa N."/>
            <person name="Hill D."/>
            <person name="Huminiecki L."/>
            <person name="Iacono M."/>
            <person name="Ikeo K."/>
            <person name="Iwama A."/>
            <person name="Ishikawa T."/>
            <person name="Jakt M."/>
            <person name="Kanapin A."/>
            <person name="Katoh M."/>
            <person name="Kawasawa Y."/>
            <person name="Kelso J."/>
            <person name="Kitamura H."/>
            <person name="Kitano H."/>
            <person name="Kollias G."/>
            <person name="Krishnan S.P."/>
            <person name="Kruger A."/>
            <person name="Kummerfeld S.K."/>
            <person name="Kurochkin I.V."/>
            <person name="Lareau L.F."/>
            <person name="Lazarevic D."/>
            <person name="Lipovich L."/>
            <person name="Liu J."/>
            <person name="Liuni S."/>
            <person name="McWilliam S."/>
            <person name="Madan Babu M."/>
            <person name="Madera M."/>
            <person name="Marchionni L."/>
            <person name="Matsuda H."/>
            <person name="Matsuzawa S."/>
            <person name="Miki H."/>
            <person name="Mignone F."/>
            <person name="Miyake S."/>
            <person name="Morris K."/>
            <person name="Mottagui-Tabar S."/>
            <person name="Mulder N."/>
            <person name="Nakano N."/>
            <person name="Nakauchi H."/>
            <person name="Ng P."/>
            <person name="Nilsson R."/>
            <person name="Nishiguchi S."/>
            <person name="Nishikawa S."/>
            <person name="Nori F."/>
            <person name="Ohara O."/>
            <person name="Okazaki Y."/>
            <person name="Orlando V."/>
            <person name="Pang K.C."/>
            <person name="Pavan W.J."/>
            <person name="Pavesi G."/>
            <person name="Pesole G."/>
            <person name="Petrovsky N."/>
            <person name="Piazza S."/>
            <person name="Reed J."/>
            <person name="Reid J.F."/>
            <person name="Ring B.Z."/>
            <person name="Ringwald M."/>
            <person name="Rost B."/>
            <person name="Ruan Y."/>
            <person name="Salzberg S.L."/>
            <person name="Sandelin A."/>
            <person name="Schneider C."/>
            <person name="Schoenbach C."/>
            <person name="Sekiguchi K."/>
            <person name="Semple C.A."/>
            <person name="Seno S."/>
            <person name="Sessa L."/>
            <person name="Sheng Y."/>
            <person name="Shibata Y."/>
            <person name="Shimada H."/>
            <person name="Shimada K."/>
            <person name="Silva D."/>
            <person name="Sinclair B."/>
            <person name="Sperling S."/>
            <person name="Stupka E."/>
            <person name="Sugiura K."/>
            <person name="Sultana R."/>
            <person name="Takenaka Y."/>
            <person name="Taki K."/>
            <person name="Tammoja K."/>
            <person name="Tan S.L."/>
            <person name="Tang S."/>
            <person name="Taylor M.S."/>
            <person name="Tegner J."/>
            <person name="Teichmann S.A."/>
            <person name="Ueda H.R."/>
            <person name="van Nimwegen E."/>
            <person name="Verardo R."/>
            <person name="Wei C.L."/>
            <person name="Yagi K."/>
            <person name="Yamanishi H."/>
            <person name="Zabarovsky E."/>
            <person name="Zhu S."/>
            <person name="Zimmer A."/>
            <person name="Hide W."/>
            <person name="Bult C."/>
            <person name="Grimmond S.M."/>
            <person name="Teasdale R.D."/>
            <person name="Liu E.T."/>
            <person name="Brusic V."/>
            <person name="Quackenbush J."/>
            <person name="Wahlestedt C."/>
            <person name="Mattick J.S."/>
            <person name="Hume D.A."/>
            <person name="Kai C."/>
            <person name="Sasaki D."/>
            <person name="Tomaru Y."/>
            <person name="Fukuda S."/>
            <person name="Kanamori-Katayama M."/>
            <person name="Suzuki M."/>
            <person name="Aoki J."/>
            <person name="Arakawa T."/>
            <person name="Iida J."/>
            <person name="Imamura K."/>
            <person name="Itoh M."/>
            <person name="Kato T."/>
            <person name="Kawaji H."/>
            <person name="Kawagashira N."/>
            <person name="Kawashima T."/>
            <person name="Kojima M."/>
            <person name="Kondo S."/>
            <person name="Konno H."/>
            <person name="Nakano K."/>
            <person name="Ninomiya N."/>
            <person name="Nishio T."/>
            <person name="Okada M."/>
            <person name="Plessy C."/>
            <person name="Shibata K."/>
            <person name="Shiraki T."/>
            <person name="Suzuki S."/>
            <person name="Tagami M."/>
            <person name="Waki K."/>
            <person name="Watahiki A."/>
            <person name="Okamura-Oho Y."/>
            <person name="Suzuki H."/>
            <person name="Kawai J."/>
            <person name="Hayashizaki Y."/>
        </authorList>
    </citation>
    <scope>NUCLEOTIDE SEQUENCE [LARGE SCALE MRNA]</scope>
</reference>
<reference key="2">
    <citation type="journal article" date="2009" name="PLoS Biol.">
        <title>Lineage-specific biology revealed by a finished genome assembly of the mouse.</title>
        <authorList>
            <person name="Church D.M."/>
            <person name="Goodstadt L."/>
            <person name="Hillier L.W."/>
            <person name="Zody M.C."/>
            <person name="Goldstein S."/>
            <person name="She X."/>
            <person name="Bult C.J."/>
            <person name="Agarwala R."/>
            <person name="Cherry J.L."/>
            <person name="DiCuccio M."/>
            <person name="Hlavina W."/>
            <person name="Kapustin Y."/>
            <person name="Meric P."/>
            <person name="Maglott D."/>
            <person name="Birtle Z."/>
            <person name="Marques A.C."/>
            <person name="Graves T."/>
            <person name="Zhou S."/>
            <person name="Teague B."/>
            <person name="Potamousis K."/>
            <person name="Churas C."/>
            <person name="Place M."/>
            <person name="Herschleb J."/>
            <person name="Runnheim R."/>
            <person name="Forrest D."/>
            <person name="Amos-Landgraf J."/>
            <person name="Schwartz D.C."/>
            <person name="Cheng Z."/>
            <person name="Lindblad-Toh K."/>
            <person name="Eichler E.E."/>
            <person name="Ponting C.P."/>
        </authorList>
    </citation>
    <scope>NUCLEOTIDE SEQUENCE [LARGE SCALE GENOMIC DNA]</scope>
    <source>
        <strain>C57BL/6J</strain>
    </source>
</reference>
<reference key="3">
    <citation type="journal article" date="2004" name="Genome Res.">
        <title>The status, quality, and expansion of the NIH full-length cDNA project: the Mammalian Gene Collection (MGC).</title>
        <authorList>
            <consortium name="The MGC Project Team"/>
        </authorList>
    </citation>
    <scope>NUCLEOTIDE SEQUENCE [LARGE SCALE MRNA]</scope>
</reference>
<reference key="4">
    <citation type="journal article" date="2011" name="J. Lipid Res.">
        <title>Crucial role of alkaline sphingomyelinase in sphingomyelin digestion: a study on enzyme knockout mice.</title>
        <authorList>
            <person name="Zhang Y."/>
            <person name="Cheng Y."/>
            <person name="Hansen G.H."/>
            <person name="Niels-Christiansen L.L."/>
            <person name="Koentgen F."/>
            <person name="Ohlsson L."/>
            <person name="Nilsson A."/>
            <person name="Duan R.D."/>
        </authorList>
    </citation>
    <scope>DISRUPTION PHENOTYPE</scope>
    <scope>TISSUE SPECIFICITY</scope>
    <scope>CATALYTIC ACTIVITY</scope>
    <scope>FUNCTION</scope>
</reference>
<reference key="5">
    <citation type="journal article" date="2014" name="Am. J. Physiol.">
        <title>Alkaline sphingomyelinase (NPP7) promotes cholesterol absorption by affecting sphingomyelin levels in the gut: A study with NPP7 knockout mice.</title>
        <authorList>
            <person name="Zhang P."/>
            <person name="Chen Y."/>
            <person name="Cheng Y."/>
            <person name="Hertervig E."/>
            <person name="Ohlsson L."/>
            <person name="Nilsson A."/>
            <person name="Duan R.D."/>
        </authorList>
    </citation>
    <scope>FUNCTION</scope>
</reference>
<feature type="signal peptide" evidence="3">
    <location>
        <begin position="1"/>
        <end position="21"/>
    </location>
</feature>
<feature type="chain" id="PRO_5014309164" description="Ectonucleotide pyrophosphatase/phosphodiesterase family member 7" evidence="3">
    <location>
        <begin position="22"/>
        <end position="439"/>
    </location>
</feature>
<feature type="topological domain" description="Extracellular" evidence="7">
    <location>
        <begin position="22"/>
        <end position="414"/>
    </location>
</feature>
<feature type="transmembrane region" description="Helical" evidence="3">
    <location>
        <begin position="415"/>
        <end position="435"/>
    </location>
</feature>
<feature type="topological domain" description="Cytoplasmic" evidence="7">
    <location>
        <begin position="436"/>
        <end position="439"/>
    </location>
</feature>
<feature type="region of interest" description="Required for enzyme activity" evidence="2">
    <location>
        <begin position="69"/>
        <end position="75"/>
    </location>
</feature>
<feature type="active site" description="Nucleophile" evidence="2">
    <location>
        <position position="72"/>
    </location>
</feature>
<feature type="binding site" evidence="2">
    <location>
        <position position="36"/>
    </location>
    <ligand>
        <name>Zn(2+)</name>
        <dbReference type="ChEBI" id="CHEBI:29105"/>
        <label>1</label>
    </ligand>
</feature>
<feature type="binding site" evidence="2">
    <location>
        <position position="72"/>
    </location>
    <ligand>
        <name>Zn(2+)</name>
        <dbReference type="ChEBI" id="CHEBI:29105"/>
        <label>1</label>
    </ligand>
</feature>
<feature type="binding site" evidence="2">
    <location>
        <position position="93"/>
    </location>
    <ligand>
        <name>substrate</name>
    </ligand>
</feature>
<feature type="binding site" evidence="2">
    <location>
        <position position="196"/>
    </location>
    <ligand>
        <name>Zn(2+)</name>
        <dbReference type="ChEBI" id="CHEBI:29105"/>
        <label>2</label>
    </ligand>
</feature>
<feature type="binding site" evidence="2">
    <location>
        <position position="200"/>
    </location>
    <ligand>
        <name>Zn(2+)</name>
        <dbReference type="ChEBI" id="CHEBI:29105"/>
        <label>2</label>
    </ligand>
</feature>
<feature type="binding site" evidence="2">
    <location>
        <position position="243"/>
    </location>
    <ligand>
        <name>Zn(2+)</name>
        <dbReference type="ChEBI" id="CHEBI:29105"/>
        <label>1</label>
    </ligand>
</feature>
<feature type="binding site" evidence="2">
    <location>
        <position position="244"/>
    </location>
    <ligand>
        <name>Zn(2+)</name>
        <dbReference type="ChEBI" id="CHEBI:29105"/>
        <label>1</label>
    </ligand>
</feature>
<feature type="binding site" evidence="2">
    <location>
        <position position="350"/>
    </location>
    <ligand>
        <name>Zn(2+)</name>
        <dbReference type="ChEBI" id="CHEBI:29105"/>
        <label>2</label>
    </ligand>
</feature>
<feature type="glycosylation site" description="N-linked (GlcNAc...) asparagine" evidence="4">
    <location>
        <position position="97"/>
    </location>
</feature>
<feature type="glycosylation site" description="N-linked (GlcNAc...) asparagine" evidence="4">
    <location>
        <position position="118"/>
    </location>
</feature>
<feature type="glycosylation site" description="N-linked (GlcNAc...) asparagine" evidence="4">
    <location>
        <position position="143"/>
    </location>
</feature>
<feature type="glycosylation site" description="N-linked (GlcNAc...) asparagine" evidence="4">
    <location>
        <position position="165"/>
    </location>
</feature>
<feature type="glycosylation site" description="N-linked (GlcNAc...) asparagine" evidence="4">
    <location>
        <position position="264"/>
    </location>
</feature>
<dbReference type="EC" id="3.1.4.12" evidence="5"/>
<dbReference type="EMBL" id="AK144474">
    <property type="protein sequence ID" value="BAE25908.1"/>
    <property type="molecule type" value="mRNA"/>
</dbReference>
<dbReference type="EMBL" id="AK167678">
    <property type="protein sequence ID" value="BAE39727.1"/>
    <property type="molecule type" value="mRNA"/>
</dbReference>
<dbReference type="EMBL" id="AL591544">
    <property type="status" value="NOT_ANNOTATED_CDS"/>
    <property type="molecule type" value="Genomic_DNA"/>
</dbReference>
<dbReference type="EMBL" id="BC141245">
    <property type="protein sequence ID" value="AAI41246.1"/>
    <property type="molecule type" value="mRNA"/>
</dbReference>
<dbReference type="CCDS" id="CCDS88293.1"/>
<dbReference type="RefSeq" id="NP_001346503.1">
    <property type="nucleotide sequence ID" value="NM_001359574.1"/>
</dbReference>
<dbReference type="RefSeq" id="XP_006533321.1">
    <property type="nucleotide sequence ID" value="XM_006533258.2"/>
</dbReference>
<dbReference type="SMR" id="Q3TIW9"/>
<dbReference type="FunCoup" id="Q3TIW9">
    <property type="interactions" value="30"/>
</dbReference>
<dbReference type="STRING" id="10090.ENSMUSP00000090027"/>
<dbReference type="GlyCosmos" id="Q3TIW9">
    <property type="glycosylation" value="5 sites, No reported glycans"/>
</dbReference>
<dbReference type="GlyGen" id="Q3TIW9">
    <property type="glycosylation" value="6 sites"/>
</dbReference>
<dbReference type="iPTMnet" id="Q3TIW9"/>
<dbReference type="PhosphoSitePlus" id="Q3TIW9"/>
<dbReference type="PaxDb" id="10090-ENSMUSP00000090027"/>
<dbReference type="ProteomicsDB" id="324810"/>
<dbReference type="ProteomicsDB" id="347416"/>
<dbReference type="Antibodypedia" id="19751">
    <property type="antibodies" value="245 antibodies from 27 providers"/>
</dbReference>
<dbReference type="Ensembl" id="ENSMUST00000106273.3">
    <property type="protein sequence ID" value="ENSMUSP00000101880.3"/>
    <property type="gene ID" value="ENSMUSG00000046697.18"/>
</dbReference>
<dbReference type="GeneID" id="238011"/>
<dbReference type="UCSC" id="uc007mpr.1">
    <property type="organism name" value="mouse"/>
</dbReference>
<dbReference type="UCSC" id="uc007mps.1">
    <property type="organism name" value="mouse"/>
</dbReference>
<dbReference type="AGR" id="MGI:3027917"/>
<dbReference type="MGI" id="MGI:3027917">
    <property type="gene designation" value="Enpp7"/>
</dbReference>
<dbReference type="VEuPathDB" id="HostDB:ENSMUSG00000046697"/>
<dbReference type="eggNOG" id="KOG2645">
    <property type="taxonomic scope" value="Eukaryota"/>
</dbReference>
<dbReference type="GeneTree" id="ENSGT00940000159339"/>
<dbReference type="HOGENOM" id="CLU_017594_1_0_1"/>
<dbReference type="InParanoid" id="Q3TIW9"/>
<dbReference type="TreeFam" id="TF330032"/>
<dbReference type="Reactome" id="R-MMU-9840310">
    <property type="pathway name" value="Glycosphingolipid catabolism"/>
</dbReference>
<dbReference type="BioGRID-ORCS" id="238011">
    <property type="hits" value="1 hit in 78 CRISPR screens"/>
</dbReference>
<dbReference type="PRO" id="PR:Q3TIW9"/>
<dbReference type="Proteomes" id="UP000000589">
    <property type="component" value="Chromosome 11"/>
</dbReference>
<dbReference type="Bgee" id="ENSMUSG00000046697">
    <property type="expression patterns" value="Expressed in jejunum and 8 other cell types or tissues"/>
</dbReference>
<dbReference type="ExpressionAtlas" id="Q3TIW9">
    <property type="expression patterns" value="baseline and differential"/>
</dbReference>
<dbReference type="GO" id="GO:0005886">
    <property type="term" value="C:plasma membrane"/>
    <property type="evidence" value="ECO:0007669"/>
    <property type="project" value="UniProtKB-SubCell"/>
</dbReference>
<dbReference type="GO" id="GO:0046872">
    <property type="term" value="F:metal ion binding"/>
    <property type="evidence" value="ECO:0007669"/>
    <property type="project" value="UniProtKB-KW"/>
</dbReference>
<dbReference type="GO" id="GO:0008081">
    <property type="term" value="F:phosphoric diester hydrolase activity"/>
    <property type="evidence" value="ECO:0000250"/>
    <property type="project" value="UniProtKB"/>
</dbReference>
<dbReference type="GO" id="GO:0004767">
    <property type="term" value="F:sphingomyelin phosphodiesterase activity"/>
    <property type="evidence" value="ECO:0000315"/>
    <property type="project" value="UniProtKB"/>
</dbReference>
<dbReference type="GO" id="GO:0055089">
    <property type="term" value="P:fatty acid homeostasis"/>
    <property type="evidence" value="ECO:0000315"/>
    <property type="project" value="UniProtKB"/>
</dbReference>
<dbReference type="GO" id="GO:0044241">
    <property type="term" value="P:lipid digestion"/>
    <property type="evidence" value="ECO:0000315"/>
    <property type="project" value="UniProtKB"/>
</dbReference>
<dbReference type="GO" id="GO:2000304">
    <property type="term" value="P:positive regulation of ceramide biosynthetic process"/>
    <property type="evidence" value="ECO:0000315"/>
    <property type="project" value="UniProtKB"/>
</dbReference>
<dbReference type="GO" id="GO:0045797">
    <property type="term" value="P:positive regulation of intestinal cholesterol absorption"/>
    <property type="evidence" value="ECO:0000315"/>
    <property type="project" value="UniProtKB"/>
</dbReference>
<dbReference type="GO" id="GO:2000755">
    <property type="term" value="P:positive regulation of sphingomyelin catabolic process"/>
    <property type="evidence" value="ECO:0000315"/>
    <property type="project" value="UniProtKB"/>
</dbReference>
<dbReference type="GO" id="GO:1904729">
    <property type="term" value="P:regulation of intestinal lipid absorption"/>
    <property type="evidence" value="ECO:0000315"/>
    <property type="project" value="UniProtKB"/>
</dbReference>
<dbReference type="GO" id="GO:0006685">
    <property type="term" value="P:sphingomyelin catabolic process"/>
    <property type="evidence" value="ECO:0000266"/>
    <property type="project" value="MGI"/>
</dbReference>
<dbReference type="CDD" id="cd16018">
    <property type="entry name" value="Enpp"/>
    <property type="match status" value="1"/>
</dbReference>
<dbReference type="FunFam" id="3.40.720.10:FF:000048">
    <property type="entry name" value="ectonucleotide pyrophosphatase/phosphodiesterase family member 7"/>
    <property type="match status" value="1"/>
</dbReference>
<dbReference type="Gene3D" id="3.30.1360.180">
    <property type="match status" value="1"/>
</dbReference>
<dbReference type="Gene3D" id="3.40.720.10">
    <property type="entry name" value="Alkaline Phosphatase, subunit A"/>
    <property type="match status" value="1"/>
</dbReference>
<dbReference type="InterPro" id="IPR017850">
    <property type="entry name" value="Alkaline_phosphatase_core_sf"/>
</dbReference>
<dbReference type="InterPro" id="IPR002591">
    <property type="entry name" value="Phosphodiest/P_Trfase"/>
</dbReference>
<dbReference type="PANTHER" id="PTHR10151">
    <property type="entry name" value="ECTONUCLEOTIDE PYROPHOSPHATASE/PHOSPHODIESTERASE"/>
    <property type="match status" value="1"/>
</dbReference>
<dbReference type="PANTHER" id="PTHR10151:SF63">
    <property type="entry name" value="ECTONUCLEOTIDE PYROPHOSPHATASE_PHOSPHODIESTERASE FAMILY MEMBER 7"/>
    <property type="match status" value="1"/>
</dbReference>
<dbReference type="Pfam" id="PF01663">
    <property type="entry name" value="Phosphodiest"/>
    <property type="match status" value="1"/>
</dbReference>
<dbReference type="SUPFAM" id="SSF53649">
    <property type="entry name" value="Alkaline phosphatase-like"/>
    <property type="match status" value="1"/>
</dbReference>